<proteinExistence type="inferred from homology"/>
<sequence>MKFVDEAEIQVIAGNGGDGCVSFRREKFIPLGGPDGGDGGDGGSVWLVADENLNTLVDFRHERIFKAQRGVNGMGQQMYGKAGQDKIISVPIGTVVINVQTDEVIGDMVRHGDRLLVAKGGTGGLGNMHFKSSINRAPRQARPGEQGEERTLKLELKLLADIGMLGFPNVGKSTFIRAVSAATPKVADYPFTTLYPNLGVVKIEAYSSFVIADVPGLIEGAADGVGLGMQFLRHLQRTKLLLHMVDISATADAYGNEKVGVGLLPIEQVRKLEIELERHDPALLDKPRWLVLNKADLMPQEEAQALAEALIAELRWTAPWYLVSAVSREGTWPIMKSAMTLFEHQREVAAEQRVSSR</sequence>
<comment type="function">
    <text evidence="1">An essential GTPase which binds GTP, GDP and possibly (p)ppGpp with moderate affinity, with high nucleotide exchange rates and a fairly low GTP hydrolysis rate. Plays a role in control of the cell cycle, stress response, ribosome biogenesis and in those bacteria that undergo differentiation, in morphogenesis control.</text>
</comment>
<comment type="cofactor">
    <cofactor evidence="1">
        <name>Mg(2+)</name>
        <dbReference type="ChEBI" id="CHEBI:18420"/>
    </cofactor>
</comment>
<comment type="subunit">
    <text evidence="1">Monomer.</text>
</comment>
<comment type="subcellular location">
    <subcellularLocation>
        <location evidence="1">Cytoplasm</location>
    </subcellularLocation>
</comment>
<comment type="similarity">
    <text evidence="1">Belongs to the TRAFAC class OBG-HflX-like GTPase superfamily. OBG GTPase family.</text>
</comment>
<evidence type="ECO:0000255" key="1">
    <source>
        <dbReference type="HAMAP-Rule" id="MF_01454"/>
    </source>
</evidence>
<evidence type="ECO:0000255" key="2">
    <source>
        <dbReference type="PROSITE-ProRule" id="PRU01231"/>
    </source>
</evidence>
<keyword id="KW-0963">Cytoplasm</keyword>
<keyword id="KW-0342">GTP-binding</keyword>
<keyword id="KW-0378">Hydrolase</keyword>
<keyword id="KW-0460">Magnesium</keyword>
<keyword id="KW-0479">Metal-binding</keyword>
<keyword id="KW-0547">Nucleotide-binding</keyword>
<keyword id="KW-1185">Reference proteome</keyword>
<dbReference type="EC" id="3.6.5.-" evidence="1"/>
<dbReference type="EMBL" id="AE009442">
    <property type="protein sequence ID" value="AAO29285.1"/>
    <property type="molecule type" value="Genomic_DNA"/>
</dbReference>
<dbReference type="SMR" id="Q87BL2"/>
<dbReference type="KEGG" id="xft:PD_1441"/>
<dbReference type="HOGENOM" id="CLU_011747_2_0_6"/>
<dbReference type="Proteomes" id="UP000002516">
    <property type="component" value="Chromosome"/>
</dbReference>
<dbReference type="GO" id="GO:0005737">
    <property type="term" value="C:cytoplasm"/>
    <property type="evidence" value="ECO:0007669"/>
    <property type="project" value="UniProtKB-SubCell"/>
</dbReference>
<dbReference type="GO" id="GO:0005525">
    <property type="term" value="F:GTP binding"/>
    <property type="evidence" value="ECO:0007669"/>
    <property type="project" value="UniProtKB-UniRule"/>
</dbReference>
<dbReference type="GO" id="GO:0003924">
    <property type="term" value="F:GTPase activity"/>
    <property type="evidence" value="ECO:0007669"/>
    <property type="project" value="UniProtKB-UniRule"/>
</dbReference>
<dbReference type="GO" id="GO:0000287">
    <property type="term" value="F:magnesium ion binding"/>
    <property type="evidence" value="ECO:0007669"/>
    <property type="project" value="InterPro"/>
</dbReference>
<dbReference type="GO" id="GO:0042254">
    <property type="term" value="P:ribosome biogenesis"/>
    <property type="evidence" value="ECO:0007669"/>
    <property type="project" value="UniProtKB-UniRule"/>
</dbReference>
<dbReference type="CDD" id="cd01898">
    <property type="entry name" value="Obg"/>
    <property type="match status" value="1"/>
</dbReference>
<dbReference type="FunFam" id="2.70.210.12:FF:000001">
    <property type="entry name" value="GTPase Obg"/>
    <property type="match status" value="1"/>
</dbReference>
<dbReference type="Gene3D" id="2.70.210.12">
    <property type="entry name" value="GTP1/OBG domain"/>
    <property type="match status" value="1"/>
</dbReference>
<dbReference type="Gene3D" id="3.40.50.300">
    <property type="entry name" value="P-loop containing nucleotide triphosphate hydrolases"/>
    <property type="match status" value="1"/>
</dbReference>
<dbReference type="HAMAP" id="MF_01454">
    <property type="entry name" value="GTPase_Obg"/>
    <property type="match status" value="1"/>
</dbReference>
<dbReference type="InterPro" id="IPR031167">
    <property type="entry name" value="G_OBG"/>
</dbReference>
<dbReference type="InterPro" id="IPR006073">
    <property type="entry name" value="GTP-bd"/>
</dbReference>
<dbReference type="InterPro" id="IPR014100">
    <property type="entry name" value="GTP-bd_Obg/CgtA"/>
</dbReference>
<dbReference type="InterPro" id="IPR006074">
    <property type="entry name" value="GTP1-OBG_CS"/>
</dbReference>
<dbReference type="InterPro" id="IPR006169">
    <property type="entry name" value="GTP1_OBG_dom"/>
</dbReference>
<dbReference type="InterPro" id="IPR036726">
    <property type="entry name" value="GTP1_OBG_dom_sf"/>
</dbReference>
<dbReference type="InterPro" id="IPR045086">
    <property type="entry name" value="OBG_GTPase"/>
</dbReference>
<dbReference type="InterPro" id="IPR027417">
    <property type="entry name" value="P-loop_NTPase"/>
</dbReference>
<dbReference type="NCBIfam" id="TIGR02729">
    <property type="entry name" value="Obg_CgtA"/>
    <property type="match status" value="1"/>
</dbReference>
<dbReference type="NCBIfam" id="NF008955">
    <property type="entry name" value="PRK12297.1"/>
    <property type="match status" value="1"/>
</dbReference>
<dbReference type="NCBIfam" id="NF008956">
    <property type="entry name" value="PRK12299.1"/>
    <property type="match status" value="1"/>
</dbReference>
<dbReference type="PANTHER" id="PTHR11702">
    <property type="entry name" value="DEVELOPMENTALLY REGULATED GTP-BINDING PROTEIN-RELATED"/>
    <property type="match status" value="1"/>
</dbReference>
<dbReference type="PANTHER" id="PTHR11702:SF31">
    <property type="entry name" value="MITOCHONDRIAL RIBOSOME-ASSOCIATED GTPASE 2"/>
    <property type="match status" value="1"/>
</dbReference>
<dbReference type="Pfam" id="PF01018">
    <property type="entry name" value="GTP1_OBG"/>
    <property type="match status" value="1"/>
</dbReference>
<dbReference type="Pfam" id="PF01926">
    <property type="entry name" value="MMR_HSR1"/>
    <property type="match status" value="1"/>
</dbReference>
<dbReference type="PIRSF" id="PIRSF002401">
    <property type="entry name" value="GTP_bd_Obg/CgtA"/>
    <property type="match status" value="1"/>
</dbReference>
<dbReference type="PRINTS" id="PR00326">
    <property type="entry name" value="GTP1OBG"/>
</dbReference>
<dbReference type="SUPFAM" id="SSF82051">
    <property type="entry name" value="Obg GTP-binding protein N-terminal domain"/>
    <property type="match status" value="1"/>
</dbReference>
<dbReference type="SUPFAM" id="SSF52540">
    <property type="entry name" value="P-loop containing nucleoside triphosphate hydrolases"/>
    <property type="match status" value="1"/>
</dbReference>
<dbReference type="PROSITE" id="PS51710">
    <property type="entry name" value="G_OBG"/>
    <property type="match status" value="1"/>
</dbReference>
<dbReference type="PROSITE" id="PS00905">
    <property type="entry name" value="GTP1_OBG"/>
    <property type="match status" value="1"/>
</dbReference>
<dbReference type="PROSITE" id="PS51883">
    <property type="entry name" value="OBG"/>
    <property type="match status" value="1"/>
</dbReference>
<protein>
    <recommendedName>
        <fullName evidence="1">GTPase Obg</fullName>
        <ecNumber evidence="1">3.6.5.-</ecNumber>
    </recommendedName>
    <alternativeName>
        <fullName evidence="1">GTP-binding protein Obg</fullName>
    </alternativeName>
</protein>
<organism>
    <name type="scientific">Xylella fastidiosa (strain Temecula1 / ATCC 700964)</name>
    <dbReference type="NCBI Taxonomy" id="183190"/>
    <lineage>
        <taxon>Bacteria</taxon>
        <taxon>Pseudomonadati</taxon>
        <taxon>Pseudomonadota</taxon>
        <taxon>Gammaproteobacteria</taxon>
        <taxon>Lysobacterales</taxon>
        <taxon>Lysobacteraceae</taxon>
        <taxon>Xylella</taxon>
    </lineage>
</organism>
<feature type="chain" id="PRO_0000386404" description="GTPase Obg">
    <location>
        <begin position="1"/>
        <end position="357"/>
    </location>
</feature>
<feature type="domain" description="Obg" evidence="2">
    <location>
        <begin position="1"/>
        <end position="159"/>
    </location>
</feature>
<feature type="domain" description="OBG-type G" evidence="1">
    <location>
        <begin position="160"/>
        <end position="343"/>
    </location>
</feature>
<feature type="binding site" evidence="1">
    <location>
        <begin position="166"/>
        <end position="173"/>
    </location>
    <ligand>
        <name>GTP</name>
        <dbReference type="ChEBI" id="CHEBI:37565"/>
    </ligand>
</feature>
<feature type="binding site" evidence="1">
    <location>
        <position position="173"/>
    </location>
    <ligand>
        <name>Mg(2+)</name>
        <dbReference type="ChEBI" id="CHEBI:18420"/>
    </ligand>
</feature>
<feature type="binding site" evidence="1">
    <location>
        <begin position="191"/>
        <end position="195"/>
    </location>
    <ligand>
        <name>GTP</name>
        <dbReference type="ChEBI" id="CHEBI:37565"/>
    </ligand>
</feature>
<feature type="binding site" evidence="1">
    <location>
        <position position="193"/>
    </location>
    <ligand>
        <name>Mg(2+)</name>
        <dbReference type="ChEBI" id="CHEBI:18420"/>
    </ligand>
</feature>
<feature type="binding site" evidence="1">
    <location>
        <begin position="213"/>
        <end position="216"/>
    </location>
    <ligand>
        <name>GTP</name>
        <dbReference type="ChEBI" id="CHEBI:37565"/>
    </ligand>
</feature>
<feature type="binding site" evidence="1">
    <location>
        <begin position="293"/>
        <end position="296"/>
    </location>
    <ligand>
        <name>GTP</name>
        <dbReference type="ChEBI" id="CHEBI:37565"/>
    </ligand>
</feature>
<feature type="binding site" evidence="1">
    <location>
        <begin position="324"/>
        <end position="326"/>
    </location>
    <ligand>
        <name>GTP</name>
        <dbReference type="ChEBI" id="CHEBI:37565"/>
    </ligand>
</feature>
<accession>Q87BL2</accession>
<name>OBG_XYLFT</name>
<reference key="1">
    <citation type="journal article" date="2003" name="J. Bacteriol.">
        <title>Comparative analyses of the complete genome sequences of Pierce's disease and citrus variegated chlorosis strains of Xylella fastidiosa.</title>
        <authorList>
            <person name="Van Sluys M.A."/>
            <person name="de Oliveira M.C."/>
            <person name="Monteiro-Vitorello C.B."/>
            <person name="Miyaki C.Y."/>
            <person name="Furlan L.R."/>
            <person name="Camargo L.E.A."/>
            <person name="da Silva A.C.R."/>
            <person name="Moon D.H."/>
            <person name="Takita M.A."/>
            <person name="Lemos E.G.M."/>
            <person name="Machado M.A."/>
            <person name="Ferro M.I.T."/>
            <person name="da Silva F.R."/>
            <person name="Goldman M.H.S."/>
            <person name="Goldman G.H."/>
            <person name="Lemos M.V.F."/>
            <person name="El-Dorry H."/>
            <person name="Tsai S.M."/>
            <person name="Carrer H."/>
            <person name="Carraro D.M."/>
            <person name="de Oliveira R.C."/>
            <person name="Nunes L.R."/>
            <person name="Siqueira W.J."/>
            <person name="Coutinho L.L."/>
            <person name="Kimura E.T."/>
            <person name="Ferro E.S."/>
            <person name="Harakava R."/>
            <person name="Kuramae E.E."/>
            <person name="Marino C.L."/>
            <person name="Giglioti E."/>
            <person name="Abreu I.L."/>
            <person name="Alves L.M.C."/>
            <person name="do Amaral A.M."/>
            <person name="Baia G.S."/>
            <person name="Blanco S.R."/>
            <person name="Brito M.S."/>
            <person name="Cannavan F.S."/>
            <person name="Celestino A.V."/>
            <person name="da Cunha A.F."/>
            <person name="Fenille R.C."/>
            <person name="Ferro J.A."/>
            <person name="Formighieri E.F."/>
            <person name="Kishi L.T."/>
            <person name="Leoni S.G."/>
            <person name="Oliveira A.R."/>
            <person name="Rosa V.E. Jr."/>
            <person name="Sassaki F.T."/>
            <person name="Sena J.A.D."/>
            <person name="de Souza A.A."/>
            <person name="Truffi D."/>
            <person name="Tsukumo F."/>
            <person name="Yanai G.M."/>
            <person name="Zaros L.G."/>
            <person name="Civerolo E.L."/>
            <person name="Simpson A.J.G."/>
            <person name="Almeida N.F. Jr."/>
            <person name="Setubal J.C."/>
            <person name="Kitajima J.P."/>
        </authorList>
    </citation>
    <scope>NUCLEOTIDE SEQUENCE [LARGE SCALE GENOMIC DNA]</scope>
    <source>
        <strain>Temecula1 / ATCC 700964</strain>
    </source>
</reference>
<gene>
    <name evidence="1" type="primary">obg</name>
    <name type="ordered locus">PD_1441</name>
</gene>